<organism>
    <name type="scientific">Paracidovorax citrulli (strain AAC00-1)</name>
    <name type="common">Acidovorax citrulli</name>
    <dbReference type="NCBI Taxonomy" id="397945"/>
    <lineage>
        <taxon>Bacteria</taxon>
        <taxon>Pseudomonadati</taxon>
        <taxon>Pseudomonadota</taxon>
        <taxon>Betaproteobacteria</taxon>
        <taxon>Burkholderiales</taxon>
        <taxon>Comamonadaceae</taxon>
        <taxon>Paracidovorax</taxon>
    </lineage>
</organism>
<comment type="function">
    <text evidence="1">Involved in the biosynthesis of the chorismate, which leads to the biosynthesis of aromatic amino acids. Catalyzes the reversible NADPH linked reduction of 3-dehydroshikimate (DHSA) to yield shikimate (SA).</text>
</comment>
<comment type="catalytic activity">
    <reaction evidence="1">
        <text>shikimate + NADP(+) = 3-dehydroshikimate + NADPH + H(+)</text>
        <dbReference type="Rhea" id="RHEA:17737"/>
        <dbReference type="ChEBI" id="CHEBI:15378"/>
        <dbReference type="ChEBI" id="CHEBI:16630"/>
        <dbReference type="ChEBI" id="CHEBI:36208"/>
        <dbReference type="ChEBI" id="CHEBI:57783"/>
        <dbReference type="ChEBI" id="CHEBI:58349"/>
        <dbReference type="EC" id="1.1.1.25"/>
    </reaction>
</comment>
<comment type="pathway">
    <text evidence="1">Metabolic intermediate biosynthesis; chorismate biosynthesis; chorismate from D-erythrose 4-phosphate and phosphoenolpyruvate: step 4/7.</text>
</comment>
<comment type="subunit">
    <text evidence="1">Homodimer.</text>
</comment>
<comment type="similarity">
    <text evidence="1">Belongs to the shikimate dehydrogenase family.</text>
</comment>
<name>AROE_PARC0</name>
<sequence>MTTTSAPDVYCVMGHPVEHSRSPWIHARFAELTGQRIAYTRRLVPLDGFARALADFAAAGGAGCNVTVPFKHDAARLATHASDRVRRAGAANTLSFRADGTVHAENTDGLGLVADIVVNAGVALAGRDVLLVGAGGAAAGVLAPLLDQAPRRITVANRTEARAQALVQAHADLAASRQVVLEALPIGQPGTGFDVVINATASSLAGGEVPVPDTVLREGTLAYDMMYGPAAQGFMDWARAHGAVPRDGLGMLVEQAAEAFAVWRGVRPPAAQVLQELRAQL</sequence>
<gene>
    <name evidence="1" type="primary">aroE</name>
    <name type="ordered locus">Aave_0841</name>
</gene>
<reference key="1">
    <citation type="submission" date="2006-12" db="EMBL/GenBank/DDBJ databases">
        <title>Complete sequence of Acidovorax avenae subsp. citrulli AAC00-1.</title>
        <authorList>
            <person name="Copeland A."/>
            <person name="Lucas S."/>
            <person name="Lapidus A."/>
            <person name="Barry K."/>
            <person name="Detter J.C."/>
            <person name="Glavina del Rio T."/>
            <person name="Dalin E."/>
            <person name="Tice H."/>
            <person name="Pitluck S."/>
            <person name="Kiss H."/>
            <person name="Brettin T."/>
            <person name="Bruce D."/>
            <person name="Han C."/>
            <person name="Tapia R."/>
            <person name="Gilna P."/>
            <person name="Schmutz J."/>
            <person name="Larimer F."/>
            <person name="Land M."/>
            <person name="Hauser L."/>
            <person name="Kyrpides N."/>
            <person name="Kim E."/>
            <person name="Stahl D."/>
            <person name="Richardson P."/>
        </authorList>
    </citation>
    <scope>NUCLEOTIDE SEQUENCE [LARGE SCALE GENOMIC DNA]</scope>
    <source>
        <strain>AAC00-1</strain>
    </source>
</reference>
<dbReference type="EC" id="1.1.1.25" evidence="1"/>
<dbReference type="EMBL" id="CP000512">
    <property type="protein sequence ID" value="ABM31439.1"/>
    <property type="molecule type" value="Genomic_DNA"/>
</dbReference>
<dbReference type="RefSeq" id="WP_011793999.1">
    <property type="nucleotide sequence ID" value="NC_008752.1"/>
</dbReference>
<dbReference type="SMR" id="A1TKF1"/>
<dbReference type="STRING" id="397945.Aave_0841"/>
<dbReference type="GeneID" id="79790497"/>
<dbReference type="KEGG" id="aav:Aave_0841"/>
<dbReference type="eggNOG" id="COG0169">
    <property type="taxonomic scope" value="Bacteria"/>
</dbReference>
<dbReference type="HOGENOM" id="CLU_044063_2_1_4"/>
<dbReference type="OrthoDB" id="9776868at2"/>
<dbReference type="UniPathway" id="UPA00053">
    <property type="reaction ID" value="UER00087"/>
</dbReference>
<dbReference type="Proteomes" id="UP000002596">
    <property type="component" value="Chromosome"/>
</dbReference>
<dbReference type="GO" id="GO:0005829">
    <property type="term" value="C:cytosol"/>
    <property type="evidence" value="ECO:0007669"/>
    <property type="project" value="TreeGrafter"/>
</dbReference>
<dbReference type="GO" id="GO:0050661">
    <property type="term" value="F:NADP binding"/>
    <property type="evidence" value="ECO:0007669"/>
    <property type="project" value="InterPro"/>
</dbReference>
<dbReference type="GO" id="GO:0004764">
    <property type="term" value="F:shikimate 3-dehydrogenase (NADP+) activity"/>
    <property type="evidence" value="ECO:0007669"/>
    <property type="project" value="UniProtKB-UniRule"/>
</dbReference>
<dbReference type="GO" id="GO:0008652">
    <property type="term" value="P:amino acid biosynthetic process"/>
    <property type="evidence" value="ECO:0007669"/>
    <property type="project" value="UniProtKB-KW"/>
</dbReference>
<dbReference type="GO" id="GO:0009073">
    <property type="term" value="P:aromatic amino acid family biosynthetic process"/>
    <property type="evidence" value="ECO:0007669"/>
    <property type="project" value="UniProtKB-KW"/>
</dbReference>
<dbReference type="GO" id="GO:0009423">
    <property type="term" value="P:chorismate biosynthetic process"/>
    <property type="evidence" value="ECO:0007669"/>
    <property type="project" value="UniProtKB-UniRule"/>
</dbReference>
<dbReference type="GO" id="GO:0019632">
    <property type="term" value="P:shikimate metabolic process"/>
    <property type="evidence" value="ECO:0007669"/>
    <property type="project" value="InterPro"/>
</dbReference>
<dbReference type="CDD" id="cd01065">
    <property type="entry name" value="NAD_bind_Shikimate_DH"/>
    <property type="match status" value="1"/>
</dbReference>
<dbReference type="FunFam" id="3.40.50.10860:FF:000006">
    <property type="entry name" value="Shikimate dehydrogenase (NADP(+))"/>
    <property type="match status" value="1"/>
</dbReference>
<dbReference type="Gene3D" id="3.40.50.10860">
    <property type="entry name" value="Leucine Dehydrogenase, chain A, domain 1"/>
    <property type="match status" value="1"/>
</dbReference>
<dbReference type="Gene3D" id="3.40.50.720">
    <property type="entry name" value="NAD(P)-binding Rossmann-like Domain"/>
    <property type="match status" value="1"/>
</dbReference>
<dbReference type="HAMAP" id="MF_00222">
    <property type="entry name" value="Shikimate_DH_AroE"/>
    <property type="match status" value="1"/>
</dbReference>
<dbReference type="InterPro" id="IPR046346">
    <property type="entry name" value="Aminoacid_DH-like_N_sf"/>
</dbReference>
<dbReference type="InterPro" id="IPR036291">
    <property type="entry name" value="NAD(P)-bd_dom_sf"/>
</dbReference>
<dbReference type="InterPro" id="IPR041121">
    <property type="entry name" value="SDH_C"/>
</dbReference>
<dbReference type="InterPro" id="IPR011342">
    <property type="entry name" value="Shikimate_DH"/>
</dbReference>
<dbReference type="InterPro" id="IPR013708">
    <property type="entry name" value="Shikimate_DH-bd_N"/>
</dbReference>
<dbReference type="InterPro" id="IPR022893">
    <property type="entry name" value="Shikimate_DH_fam"/>
</dbReference>
<dbReference type="InterPro" id="IPR006151">
    <property type="entry name" value="Shikm_DH/Glu-tRNA_Rdtase"/>
</dbReference>
<dbReference type="NCBIfam" id="TIGR00507">
    <property type="entry name" value="aroE"/>
    <property type="match status" value="1"/>
</dbReference>
<dbReference type="NCBIfam" id="NF001310">
    <property type="entry name" value="PRK00258.1-2"/>
    <property type="match status" value="1"/>
</dbReference>
<dbReference type="PANTHER" id="PTHR21089:SF1">
    <property type="entry name" value="BIFUNCTIONAL 3-DEHYDROQUINATE DEHYDRATASE_SHIKIMATE DEHYDROGENASE, CHLOROPLASTIC"/>
    <property type="match status" value="1"/>
</dbReference>
<dbReference type="PANTHER" id="PTHR21089">
    <property type="entry name" value="SHIKIMATE DEHYDROGENASE"/>
    <property type="match status" value="1"/>
</dbReference>
<dbReference type="Pfam" id="PF18317">
    <property type="entry name" value="SDH_C"/>
    <property type="match status" value="1"/>
</dbReference>
<dbReference type="Pfam" id="PF01488">
    <property type="entry name" value="Shikimate_DH"/>
    <property type="match status" value="1"/>
</dbReference>
<dbReference type="Pfam" id="PF08501">
    <property type="entry name" value="Shikimate_dh_N"/>
    <property type="match status" value="1"/>
</dbReference>
<dbReference type="SUPFAM" id="SSF53223">
    <property type="entry name" value="Aminoacid dehydrogenase-like, N-terminal domain"/>
    <property type="match status" value="1"/>
</dbReference>
<dbReference type="SUPFAM" id="SSF51735">
    <property type="entry name" value="NAD(P)-binding Rossmann-fold domains"/>
    <property type="match status" value="1"/>
</dbReference>
<protein>
    <recommendedName>
        <fullName evidence="1">Shikimate dehydrogenase (NADP(+))</fullName>
        <shortName evidence="1">SDH</shortName>
        <ecNumber evidence="1">1.1.1.25</ecNumber>
    </recommendedName>
</protein>
<evidence type="ECO:0000255" key="1">
    <source>
        <dbReference type="HAMAP-Rule" id="MF_00222"/>
    </source>
</evidence>
<proteinExistence type="inferred from homology"/>
<feature type="chain" id="PRO_0000325091" description="Shikimate dehydrogenase (NADP(+))">
    <location>
        <begin position="1"/>
        <end position="281"/>
    </location>
</feature>
<feature type="active site" description="Proton acceptor" evidence="1">
    <location>
        <position position="71"/>
    </location>
</feature>
<feature type="binding site" evidence="1">
    <location>
        <begin position="20"/>
        <end position="22"/>
    </location>
    <ligand>
        <name>shikimate</name>
        <dbReference type="ChEBI" id="CHEBI:36208"/>
    </ligand>
</feature>
<feature type="binding site" evidence="1">
    <location>
        <position position="67"/>
    </location>
    <ligand>
        <name>shikimate</name>
        <dbReference type="ChEBI" id="CHEBI:36208"/>
    </ligand>
</feature>
<feature type="binding site" evidence="1">
    <location>
        <position position="83"/>
    </location>
    <ligand>
        <name>NADP(+)</name>
        <dbReference type="ChEBI" id="CHEBI:58349"/>
    </ligand>
</feature>
<feature type="binding site" evidence="1">
    <location>
        <position position="92"/>
    </location>
    <ligand>
        <name>shikimate</name>
        <dbReference type="ChEBI" id="CHEBI:36208"/>
    </ligand>
</feature>
<feature type="binding site" evidence="1">
    <location>
        <position position="108"/>
    </location>
    <ligand>
        <name>shikimate</name>
        <dbReference type="ChEBI" id="CHEBI:36208"/>
    </ligand>
</feature>
<feature type="binding site" evidence="1">
    <location>
        <begin position="133"/>
        <end position="137"/>
    </location>
    <ligand>
        <name>NADP(+)</name>
        <dbReference type="ChEBI" id="CHEBI:58349"/>
    </ligand>
</feature>
<feature type="binding site" evidence="1">
    <location>
        <begin position="157"/>
        <end position="162"/>
    </location>
    <ligand>
        <name>NADP(+)</name>
        <dbReference type="ChEBI" id="CHEBI:58349"/>
    </ligand>
</feature>
<feature type="binding site" evidence="1">
    <location>
        <position position="225"/>
    </location>
    <ligand>
        <name>NADP(+)</name>
        <dbReference type="ChEBI" id="CHEBI:58349"/>
    </ligand>
</feature>
<feature type="binding site" evidence="1">
    <location>
        <position position="227"/>
    </location>
    <ligand>
        <name>shikimate</name>
        <dbReference type="ChEBI" id="CHEBI:36208"/>
    </ligand>
</feature>
<feature type="binding site" evidence="1">
    <location>
        <position position="248"/>
    </location>
    <ligand>
        <name>NADP(+)</name>
        <dbReference type="ChEBI" id="CHEBI:58349"/>
    </ligand>
</feature>
<accession>A1TKF1</accession>
<keyword id="KW-0028">Amino-acid biosynthesis</keyword>
<keyword id="KW-0057">Aromatic amino acid biosynthesis</keyword>
<keyword id="KW-0521">NADP</keyword>
<keyword id="KW-0560">Oxidoreductase</keyword>